<proteinExistence type="inferred from homology"/>
<sequence>MVNYPHKVSSQKRQTSLSQPKNFANRGMSFEKMINATNDYYLSQGLAVIHKKPTPIQIVQVDYPQRSRAKIVEAYFRQASTTDYSGVYNGYYIDFEVKETKQKRAIPMKNFHPHQIQHMEQVLAQQGICFVLLHFSSQQETYLLPAFDLIRFYHQDKGQKSMPLEYIREYGYEIKAGAFPQIPYLNVIKEHLLGGKTR</sequence>
<evidence type="ECO:0000255" key="1">
    <source>
        <dbReference type="HAMAP-Rule" id="MF_00130"/>
    </source>
</evidence>
<evidence type="ECO:0000256" key="2">
    <source>
        <dbReference type="SAM" id="MobiDB-lite"/>
    </source>
</evidence>
<keyword id="KW-0963">Cytoplasm</keyword>
<keyword id="KW-0227">DNA damage</keyword>
<keyword id="KW-0233">DNA recombination</keyword>
<keyword id="KW-0234">DNA repair</keyword>
<keyword id="KW-0255">Endonuclease</keyword>
<keyword id="KW-0378">Hydrolase</keyword>
<keyword id="KW-0460">Magnesium</keyword>
<keyword id="KW-0479">Metal-binding</keyword>
<keyword id="KW-0540">Nuclease</keyword>
<keyword id="KW-1185">Reference proteome</keyword>
<organism>
    <name type="scientific">Streptococcus pneumoniae serotype 2 (strain D39 / NCTC 7466)</name>
    <dbReference type="NCBI Taxonomy" id="373153"/>
    <lineage>
        <taxon>Bacteria</taxon>
        <taxon>Bacillati</taxon>
        <taxon>Bacillota</taxon>
        <taxon>Bacilli</taxon>
        <taxon>Lactobacillales</taxon>
        <taxon>Streptococcaceae</taxon>
        <taxon>Streptococcus</taxon>
    </lineage>
</organism>
<feature type="chain" id="PRO_1000016747" description="Holliday junction resolvase RecU">
    <location>
        <begin position="1"/>
        <end position="198"/>
    </location>
</feature>
<feature type="region of interest" description="Disordered" evidence="2">
    <location>
        <begin position="1"/>
        <end position="22"/>
    </location>
</feature>
<feature type="compositionally biased region" description="Polar residues" evidence="2">
    <location>
        <begin position="11"/>
        <end position="22"/>
    </location>
</feature>
<feature type="binding site" evidence="1">
    <location>
        <position position="81"/>
    </location>
    <ligand>
        <name>Mg(2+)</name>
        <dbReference type="ChEBI" id="CHEBI:18420"/>
    </ligand>
</feature>
<feature type="binding site" evidence="1">
    <location>
        <position position="83"/>
    </location>
    <ligand>
        <name>Mg(2+)</name>
        <dbReference type="ChEBI" id="CHEBI:18420"/>
    </ligand>
</feature>
<feature type="binding site" evidence="1">
    <location>
        <position position="96"/>
    </location>
    <ligand>
        <name>Mg(2+)</name>
        <dbReference type="ChEBI" id="CHEBI:18420"/>
    </ligand>
</feature>
<feature type="binding site" evidence="1">
    <location>
        <position position="115"/>
    </location>
    <ligand>
        <name>Mg(2+)</name>
        <dbReference type="ChEBI" id="CHEBI:18420"/>
    </ligand>
</feature>
<feature type="site" description="Transition state stabilizer" evidence="1">
    <location>
        <position position="98"/>
    </location>
</feature>
<dbReference type="EC" id="3.1.21.10" evidence="1"/>
<dbReference type="EMBL" id="CP000410">
    <property type="protein sequence ID" value="ABJ53846.1"/>
    <property type="molecule type" value="Genomic_DNA"/>
</dbReference>
<dbReference type="RefSeq" id="WP_000248787.1">
    <property type="nucleotide sequence ID" value="NZ_JAMLJR010000016.1"/>
</dbReference>
<dbReference type="SMR" id="Q04M97"/>
<dbReference type="PaxDb" id="373153-SPD_0337"/>
<dbReference type="GeneID" id="45652167"/>
<dbReference type="KEGG" id="spd:SPD_0337"/>
<dbReference type="eggNOG" id="COG3331">
    <property type="taxonomic scope" value="Bacteria"/>
</dbReference>
<dbReference type="HOGENOM" id="CLU_096340_0_0_9"/>
<dbReference type="BioCyc" id="SPNE373153:G1G6V-371-MONOMER"/>
<dbReference type="Proteomes" id="UP000001452">
    <property type="component" value="Chromosome"/>
</dbReference>
<dbReference type="GO" id="GO:0005737">
    <property type="term" value="C:cytoplasm"/>
    <property type="evidence" value="ECO:0007669"/>
    <property type="project" value="UniProtKB-SubCell"/>
</dbReference>
<dbReference type="GO" id="GO:0004519">
    <property type="term" value="F:endonuclease activity"/>
    <property type="evidence" value="ECO:0007669"/>
    <property type="project" value="UniProtKB-UniRule"/>
</dbReference>
<dbReference type="GO" id="GO:0000287">
    <property type="term" value="F:magnesium ion binding"/>
    <property type="evidence" value="ECO:0007669"/>
    <property type="project" value="UniProtKB-UniRule"/>
</dbReference>
<dbReference type="GO" id="GO:0003676">
    <property type="term" value="F:nucleic acid binding"/>
    <property type="evidence" value="ECO:0007669"/>
    <property type="project" value="InterPro"/>
</dbReference>
<dbReference type="GO" id="GO:0007059">
    <property type="term" value="P:chromosome segregation"/>
    <property type="evidence" value="ECO:0007669"/>
    <property type="project" value="UniProtKB-UniRule"/>
</dbReference>
<dbReference type="GO" id="GO:0006310">
    <property type="term" value="P:DNA recombination"/>
    <property type="evidence" value="ECO:0007669"/>
    <property type="project" value="UniProtKB-UniRule"/>
</dbReference>
<dbReference type="GO" id="GO:0006281">
    <property type="term" value="P:DNA repair"/>
    <property type="evidence" value="ECO:0007669"/>
    <property type="project" value="UniProtKB-UniRule"/>
</dbReference>
<dbReference type="CDD" id="cd22354">
    <property type="entry name" value="RecU-like"/>
    <property type="match status" value="1"/>
</dbReference>
<dbReference type="Gene3D" id="3.40.1350.10">
    <property type="match status" value="1"/>
</dbReference>
<dbReference type="HAMAP" id="MF_00130">
    <property type="entry name" value="RecU"/>
    <property type="match status" value="1"/>
</dbReference>
<dbReference type="InterPro" id="IPR004612">
    <property type="entry name" value="Resolv_RecU"/>
</dbReference>
<dbReference type="InterPro" id="IPR011335">
    <property type="entry name" value="Restrct_endonuc-II-like"/>
</dbReference>
<dbReference type="InterPro" id="IPR011856">
    <property type="entry name" value="tRNA_endonuc-like_dom_sf"/>
</dbReference>
<dbReference type="NCBIfam" id="NF002580">
    <property type="entry name" value="PRK02234.1-1"/>
    <property type="match status" value="1"/>
</dbReference>
<dbReference type="NCBIfam" id="NF002584">
    <property type="entry name" value="PRK02234.1-5"/>
    <property type="match status" value="1"/>
</dbReference>
<dbReference type="NCBIfam" id="TIGR00648">
    <property type="entry name" value="recU"/>
    <property type="match status" value="1"/>
</dbReference>
<dbReference type="Pfam" id="PF03838">
    <property type="entry name" value="RecU"/>
    <property type="match status" value="1"/>
</dbReference>
<dbReference type="PIRSF" id="PIRSF037785">
    <property type="entry name" value="RecU"/>
    <property type="match status" value="1"/>
</dbReference>
<dbReference type="SUPFAM" id="SSF52980">
    <property type="entry name" value="Restriction endonuclease-like"/>
    <property type="match status" value="1"/>
</dbReference>
<gene>
    <name evidence="1" type="primary">recU</name>
    <name type="ordered locus">SPD_0337</name>
</gene>
<name>RECU_STRP2</name>
<comment type="function">
    <text evidence="1">Endonuclease that resolves Holliday junction intermediates in genetic recombination. Cleaves mobile four-strand junctions by introducing symmetrical nicks in paired strands. Promotes annealing of linear ssDNA with homologous dsDNA. Required for DNA repair, homologous recombination and chromosome segregation.</text>
</comment>
<comment type="catalytic activity">
    <reaction evidence="1">
        <text>Endonucleolytic cleavage at a junction such as a reciprocal single-stranded crossover between two homologous DNA duplexes (Holliday junction).</text>
        <dbReference type="EC" id="3.1.21.10"/>
    </reaction>
</comment>
<comment type="cofactor">
    <cofactor evidence="1">
        <name>Mg(2+)</name>
        <dbReference type="ChEBI" id="CHEBI:18420"/>
    </cofactor>
    <text evidence="1">Binds 1 Mg(2+) ion per subunit.</text>
</comment>
<comment type="subcellular location">
    <subcellularLocation>
        <location evidence="1">Cytoplasm</location>
    </subcellularLocation>
</comment>
<comment type="similarity">
    <text evidence="1">Belongs to the RecU family.</text>
</comment>
<reference key="1">
    <citation type="journal article" date="2007" name="J. Bacteriol.">
        <title>Genome sequence of Avery's virulent serotype 2 strain D39 of Streptococcus pneumoniae and comparison with that of unencapsulated laboratory strain R6.</title>
        <authorList>
            <person name="Lanie J.A."/>
            <person name="Ng W.-L."/>
            <person name="Kazmierczak K.M."/>
            <person name="Andrzejewski T.M."/>
            <person name="Davidsen T.M."/>
            <person name="Wayne K.J."/>
            <person name="Tettelin H."/>
            <person name="Glass J.I."/>
            <person name="Winkler M.E."/>
        </authorList>
    </citation>
    <scope>NUCLEOTIDE SEQUENCE [LARGE SCALE GENOMIC DNA]</scope>
    <source>
        <strain>D39 / NCTC 7466</strain>
    </source>
</reference>
<accession>Q04M97</accession>
<protein>
    <recommendedName>
        <fullName evidence="1">Holliday junction resolvase RecU</fullName>
        <ecNumber evidence="1">3.1.21.10</ecNumber>
    </recommendedName>
    <alternativeName>
        <fullName evidence="1">Recombination protein U homolog</fullName>
    </alternativeName>
</protein>